<comment type="function">
    <text evidence="1">Involved in protein export. Acts as a chaperone by maintaining the newly synthesized protein in an open conformation. Functions as a peptidyl-prolyl cis-trans isomerase (By similarity).</text>
</comment>
<comment type="catalytic activity">
    <reaction>
        <text>[protein]-peptidylproline (omega=180) = [protein]-peptidylproline (omega=0)</text>
        <dbReference type="Rhea" id="RHEA:16237"/>
        <dbReference type="Rhea" id="RHEA-COMP:10747"/>
        <dbReference type="Rhea" id="RHEA-COMP:10748"/>
        <dbReference type="ChEBI" id="CHEBI:83833"/>
        <dbReference type="ChEBI" id="CHEBI:83834"/>
        <dbReference type="EC" id="5.2.1.8"/>
    </reaction>
</comment>
<comment type="subcellular location">
    <subcellularLocation>
        <location>Cytoplasm</location>
    </subcellularLocation>
    <text evidence="1">About half TF is bound to the ribosome near the polypeptide exit tunnel while the other half is free in the cytoplasm.</text>
</comment>
<comment type="domain">
    <text evidence="1">Consists of 3 domains; the N-terminus binds the ribosome, the middle domain has PPIase activity, while the C-terminus has intrinsic chaperone activity on its own.</text>
</comment>
<comment type="similarity">
    <text evidence="2">Belongs to the FKBP-type PPIase family. Tig subfamily.</text>
</comment>
<sequence length="437" mass="48327">MMSVTVETLENLERKVVLSLPWSEINAETDKKLKQTQRRAKIDGFRPGKAPLKMIAQMYGASAQNDVINELVQRRFHDVAVAQELKVAGFPRFEGVEEQDDKESFKVAAIFEVFPEVVIGDLSAQEVEKVTASVGDAEVDQTVEILRKQRTRFNHVEREARNGDRVIIDFEGKIDGEPFAGGASKNYAFVLGASQMLPEFEAGVVGMKAGESKDVTVNFPEDYHGKDVAGKTAVFTITLNNVSEATLPEVDADFAKALGIADGDVAKMREEVKKNVSREVERRVNEQTKESVMNALLKAVELKAPVALVNEEAARLANEMKQNFVNQGMADAANLDLPLDMFKEQAERRVSLGLILAKLVDENKLEPTEEQIKAVVANFAESYEDPQEVIDWYYAEPSRLQAPTSLAIESNVVDFVLGKAKVNEKALSFDEVMGAQA</sequence>
<evidence type="ECO:0000250" key="1"/>
<evidence type="ECO:0000305" key="2"/>
<gene>
    <name type="primary">tig</name>
    <name type="ordered locus">NMA1526</name>
</gene>
<dbReference type="EC" id="5.2.1.8"/>
<dbReference type="EMBL" id="AL157959">
    <property type="protein sequence ID" value="CAM08673.1"/>
    <property type="molecule type" value="Genomic_DNA"/>
</dbReference>
<dbReference type="PIR" id="B81844">
    <property type="entry name" value="B81844"/>
</dbReference>
<dbReference type="SMR" id="Q9JU32"/>
<dbReference type="EnsemblBacteria" id="CAM08673">
    <property type="protein sequence ID" value="CAM08673"/>
    <property type="gene ID" value="NMA1526"/>
</dbReference>
<dbReference type="KEGG" id="nma:NMA1526"/>
<dbReference type="HOGENOM" id="CLU_033058_2_0_4"/>
<dbReference type="Proteomes" id="UP000000626">
    <property type="component" value="Chromosome"/>
</dbReference>
<dbReference type="GO" id="GO:0005737">
    <property type="term" value="C:cytoplasm"/>
    <property type="evidence" value="ECO:0007669"/>
    <property type="project" value="UniProtKB-SubCell"/>
</dbReference>
<dbReference type="GO" id="GO:0003755">
    <property type="term" value="F:peptidyl-prolyl cis-trans isomerase activity"/>
    <property type="evidence" value="ECO:0007669"/>
    <property type="project" value="UniProtKB-UniRule"/>
</dbReference>
<dbReference type="GO" id="GO:0044183">
    <property type="term" value="F:protein folding chaperone"/>
    <property type="evidence" value="ECO:0007669"/>
    <property type="project" value="TreeGrafter"/>
</dbReference>
<dbReference type="GO" id="GO:0043022">
    <property type="term" value="F:ribosome binding"/>
    <property type="evidence" value="ECO:0007669"/>
    <property type="project" value="TreeGrafter"/>
</dbReference>
<dbReference type="GO" id="GO:0051083">
    <property type="term" value="P:'de novo' cotranslational protein folding"/>
    <property type="evidence" value="ECO:0007669"/>
    <property type="project" value="TreeGrafter"/>
</dbReference>
<dbReference type="GO" id="GO:0051301">
    <property type="term" value="P:cell division"/>
    <property type="evidence" value="ECO:0007669"/>
    <property type="project" value="UniProtKB-KW"/>
</dbReference>
<dbReference type="GO" id="GO:0061077">
    <property type="term" value="P:chaperone-mediated protein folding"/>
    <property type="evidence" value="ECO:0007669"/>
    <property type="project" value="TreeGrafter"/>
</dbReference>
<dbReference type="GO" id="GO:0015031">
    <property type="term" value="P:protein transport"/>
    <property type="evidence" value="ECO:0007669"/>
    <property type="project" value="UniProtKB-UniRule"/>
</dbReference>
<dbReference type="GO" id="GO:0043335">
    <property type="term" value="P:protein unfolding"/>
    <property type="evidence" value="ECO:0007669"/>
    <property type="project" value="TreeGrafter"/>
</dbReference>
<dbReference type="FunFam" id="3.10.50.40:FF:000001">
    <property type="entry name" value="Trigger factor"/>
    <property type="match status" value="1"/>
</dbReference>
<dbReference type="FunFam" id="3.30.70.1050:FF:000007">
    <property type="entry name" value="Trigger factor"/>
    <property type="match status" value="1"/>
</dbReference>
<dbReference type="Gene3D" id="3.10.50.40">
    <property type="match status" value="1"/>
</dbReference>
<dbReference type="Gene3D" id="3.30.70.1050">
    <property type="entry name" value="Trigger factor ribosome-binding domain"/>
    <property type="match status" value="1"/>
</dbReference>
<dbReference type="Gene3D" id="1.10.3120.10">
    <property type="entry name" value="Trigger factor, C-terminal domain"/>
    <property type="match status" value="1"/>
</dbReference>
<dbReference type="HAMAP" id="MF_00303">
    <property type="entry name" value="Trigger_factor_Tig"/>
    <property type="match status" value="1"/>
</dbReference>
<dbReference type="InterPro" id="IPR046357">
    <property type="entry name" value="PPIase_dom_sf"/>
</dbReference>
<dbReference type="InterPro" id="IPR001179">
    <property type="entry name" value="PPIase_FKBP_dom"/>
</dbReference>
<dbReference type="InterPro" id="IPR005215">
    <property type="entry name" value="Trig_fac"/>
</dbReference>
<dbReference type="InterPro" id="IPR008880">
    <property type="entry name" value="Trigger_fac_C"/>
</dbReference>
<dbReference type="InterPro" id="IPR037041">
    <property type="entry name" value="Trigger_fac_C_sf"/>
</dbReference>
<dbReference type="InterPro" id="IPR008881">
    <property type="entry name" value="Trigger_fac_ribosome-bd_bac"/>
</dbReference>
<dbReference type="InterPro" id="IPR036611">
    <property type="entry name" value="Trigger_fac_ribosome-bd_sf"/>
</dbReference>
<dbReference type="InterPro" id="IPR027304">
    <property type="entry name" value="Trigger_fact/SurA_dom_sf"/>
</dbReference>
<dbReference type="NCBIfam" id="TIGR00115">
    <property type="entry name" value="tig"/>
    <property type="match status" value="1"/>
</dbReference>
<dbReference type="PANTHER" id="PTHR30560">
    <property type="entry name" value="TRIGGER FACTOR CHAPERONE AND PEPTIDYL-PROLYL CIS/TRANS ISOMERASE"/>
    <property type="match status" value="1"/>
</dbReference>
<dbReference type="PANTHER" id="PTHR30560:SF3">
    <property type="entry name" value="TRIGGER FACTOR-LIKE PROTEIN TIG, CHLOROPLASTIC"/>
    <property type="match status" value="1"/>
</dbReference>
<dbReference type="Pfam" id="PF00254">
    <property type="entry name" value="FKBP_C"/>
    <property type="match status" value="1"/>
</dbReference>
<dbReference type="Pfam" id="PF05698">
    <property type="entry name" value="Trigger_C"/>
    <property type="match status" value="1"/>
</dbReference>
<dbReference type="Pfam" id="PF05697">
    <property type="entry name" value="Trigger_N"/>
    <property type="match status" value="1"/>
</dbReference>
<dbReference type="PIRSF" id="PIRSF003095">
    <property type="entry name" value="Trigger_factor"/>
    <property type="match status" value="1"/>
</dbReference>
<dbReference type="SUPFAM" id="SSF54534">
    <property type="entry name" value="FKBP-like"/>
    <property type="match status" value="1"/>
</dbReference>
<dbReference type="SUPFAM" id="SSF109998">
    <property type="entry name" value="Triger factor/SurA peptide-binding domain-like"/>
    <property type="match status" value="1"/>
</dbReference>
<dbReference type="SUPFAM" id="SSF102735">
    <property type="entry name" value="Trigger factor ribosome-binding domain"/>
    <property type="match status" value="1"/>
</dbReference>
<dbReference type="PROSITE" id="PS50059">
    <property type="entry name" value="FKBP_PPIASE"/>
    <property type="match status" value="1"/>
</dbReference>
<keyword id="KW-0131">Cell cycle</keyword>
<keyword id="KW-0132">Cell division</keyword>
<keyword id="KW-0143">Chaperone</keyword>
<keyword id="KW-0963">Cytoplasm</keyword>
<keyword id="KW-0413">Isomerase</keyword>
<keyword id="KW-0697">Rotamase</keyword>
<organism>
    <name type="scientific">Neisseria meningitidis serogroup A / serotype 4A (strain DSM 15465 / Z2491)</name>
    <dbReference type="NCBI Taxonomy" id="122587"/>
    <lineage>
        <taxon>Bacteria</taxon>
        <taxon>Pseudomonadati</taxon>
        <taxon>Pseudomonadota</taxon>
        <taxon>Betaproteobacteria</taxon>
        <taxon>Neisseriales</taxon>
        <taxon>Neisseriaceae</taxon>
        <taxon>Neisseria</taxon>
    </lineage>
</organism>
<feature type="chain" id="PRO_0000179393" description="Trigger factor">
    <location>
        <begin position="1"/>
        <end position="437"/>
    </location>
</feature>
<feature type="domain" description="PPIase FKBP-type">
    <location>
        <begin position="163"/>
        <end position="248"/>
    </location>
</feature>
<proteinExistence type="inferred from homology"/>
<protein>
    <recommendedName>
        <fullName>Trigger factor</fullName>
        <shortName>TF</shortName>
        <ecNumber>5.2.1.8</ecNumber>
    </recommendedName>
    <alternativeName>
        <fullName>PPIase</fullName>
    </alternativeName>
</protein>
<name>TIG_NEIMA</name>
<accession>Q9JU32</accession>
<accession>A1ISB7</accession>
<reference key="1">
    <citation type="journal article" date="2000" name="Nature">
        <title>Complete DNA sequence of a serogroup A strain of Neisseria meningitidis Z2491.</title>
        <authorList>
            <person name="Parkhill J."/>
            <person name="Achtman M."/>
            <person name="James K.D."/>
            <person name="Bentley S.D."/>
            <person name="Churcher C.M."/>
            <person name="Klee S.R."/>
            <person name="Morelli G."/>
            <person name="Basham D."/>
            <person name="Brown D."/>
            <person name="Chillingworth T."/>
            <person name="Davies R.M."/>
            <person name="Davis P."/>
            <person name="Devlin K."/>
            <person name="Feltwell T."/>
            <person name="Hamlin N."/>
            <person name="Holroyd S."/>
            <person name="Jagels K."/>
            <person name="Leather S."/>
            <person name="Moule S."/>
            <person name="Mungall K.L."/>
            <person name="Quail M.A."/>
            <person name="Rajandream M.A."/>
            <person name="Rutherford K.M."/>
            <person name="Simmonds M."/>
            <person name="Skelton J."/>
            <person name="Whitehead S."/>
            <person name="Spratt B.G."/>
            <person name="Barrell B.G."/>
        </authorList>
    </citation>
    <scope>NUCLEOTIDE SEQUENCE [LARGE SCALE GENOMIC DNA]</scope>
    <source>
        <strain>DSM 15465 / Z2491</strain>
    </source>
</reference>